<evidence type="ECO:0000255" key="1">
    <source>
        <dbReference type="HAMAP-Rule" id="MF_00480"/>
    </source>
</evidence>
<evidence type="ECO:0000305" key="2"/>
<protein>
    <recommendedName>
        <fullName evidence="1">Small ribosomal subunit protein uS7</fullName>
    </recommendedName>
    <alternativeName>
        <fullName evidence="2">30S ribosomal protein S7</fullName>
    </alternativeName>
</protein>
<gene>
    <name evidence="1" type="primary">rpsG</name>
    <name type="ordered locus">Pmen_3913</name>
</gene>
<reference key="1">
    <citation type="submission" date="2007-04" db="EMBL/GenBank/DDBJ databases">
        <title>Complete sequence of Pseudomonas mendocina ymp.</title>
        <authorList>
            <consortium name="US DOE Joint Genome Institute"/>
            <person name="Copeland A."/>
            <person name="Lucas S."/>
            <person name="Lapidus A."/>
            <person name="Barry K."/>
            <person name="Glavina del Rio T."/>
            <person name="Dalin E."/>
            <person name="Tice H."/>
            <person name="Pitluck S."/>
            <person name="Kiss H."/>
            <person name="Brettin T."/>
            <person name="Detter J.C."/>
            <person name="Bruce D."/>
            <person name="Han C."/>
            <person name="Schmutz J."/>
            <person name="Larimer F."/>
            <person name="Land M."/>
            <person name="Hauser L."/>
            <person name="Kyrpides N."/>
            <person name="Mikhailova N."/>
            <person name="Hersman L."/>
            <person name="Dubois J."/>
            <person name="Maurice P."/>
            <person name="Richardson P."/>
        </authorList>
    </citation>
    <scope>NUCLEOTIDE SEQUENCE [LARGE SCALE GENOMIC DNA]</scope>
    <source>
        <strain>ymp</strain>
    </source>
</reference>
<sequence length="156" mass="17578">MPRRRVAAKREILDDPKYGSQILAKFMNHVMESGKKAVAERIVYGALDTVKARKNSDPLEIFEKALDAIAPLVEVKSRRVGGATYQVPVEVRPSRRNALAMRWLVDYARKRGEKSMALRLAGELLDAAEGKGAAVKKREDVHRMAEANKAFSHYRF</sequence>
<comment type="function">
    <text evidence="1">One of the primary rRNA binding proteins, it binds directly to 16S rRNA where it nucleates assembly of the head domain of the 30S subunit. Is located at the subunit interface close to the decoding center, probably blocks exit of the E-site tRNA.</text>
</comment>
<comment type="subunit">
    <text evidence="1">Part of the 30S ribosomal subunit. Contacts proteins S9 and S11.</text>
</comment>
<comment type="similarity">
    <text evidence="1">Belongs to the universal ribosomal protein uS7 family.</text>
</comment>
<accession>A4XZ94</accession>
<name>RS7_ECTM1</name>
<feature type="chain" id="PRO_1000014263" description="Small ribosomal subunit protein uS7">
    <location>
        <begin position="1"/>
        <end position="156"/>
    </location>
</feature>
<dbReference type="EMBL" id="CP000680">
    <property type="protein sequence ID" value="ABP86660.1"/>
    <property type="molecule type" value="Genomic_DNA"/>
</dbReference>
<dbReference type="SMR" id="A4XZ94"/>
<dbReference type="STRING" id="399739.Pmen_3913"/>
<dbReference type="KEGG" id="pmy:Pmen_3913"/>
<dbReference type="eggNOG" id="COG0049">
    <property type="taxonomic scope" value="Bacteria"/>
</dbReference>
<dbReference type="HOGENOM" id="CLU_072226_1_1_6"/>
<dbReference type="OrthoDB" id="9807653at2"/>
<dbReference type="GO" id="GO:0015935">
    <property type="term" value="C:small ribosomal subunit"/>
    <property type="evidence" value="ECO:0007669"/>
    <property type="project" value="InterPro"/>
</dbReference>
<dbReference type="GO" id="GO:0019843">
    <property type="term" value="F:rRNA binding"/>
    <property type="evidence" value="ECO:0007669"/>
    <property type="project" value="UniProtKB-UniRule"/>
</dbReference>
<dbReference type="GO" id="GO:0003735">
    <property type="term" value="F:structural constituent of ribosome"/>
    <property type="evidence" value="ECO:0007669"/>
    <property type="project" value="InterPro"/>
</dbReference>
<dbReference type="GO" id="GO:0000049">
    <property type="term" value="F:tRNA binding"/>
    <property type="evidence" value="ECO:0007669"/>
    <property type="project" value="UniProtKB-UniRule"/>
</dbReference>
<dbReference type="GO" id="GO:0006412">
    <property type="term" value="P:translation"/>
    <property type="evidence" value="ECO:0007669"/>
    <property type="project" value="UniProtKB-UniRule"/>
</dbReference>
<dbReference type="CDD" id="cd14869">
    <property type="entry name" value="uS7_Bacteria"/>
    <property type="match status" value="1"/>
</dbReference>
<dbReference type="FunFam" id="1.10.455.10:FF:000001">
    <property type="entry name" value="30S ribosomal protein S7"/>
    <property type="match status" value="1"/>
</dbReference>
<dbReference type="Gene3D" id="1.10.455.10">
    <property type="entry name" value="Ribosomal protein S7 domain"/>
    <property type="match status" value="1"/>
</dbReference>
<dbReference type="HAMAP" id="MF_00480_B">
    <property type="entry name" value="Ribosomal_uS7_B"/>
    <property type="match status" value="1"/>
</dbReference>
<dbReference type="InterPro" id="IPR000235">
    <property type="entry name" value="Ribosomal_uS7"/>
</dbReference>
<dbReference type="InterPro" id="IPR005717">
    <property type="entry name" value="Ribosomal_uS7_bac/org-type"/>
</dbReference>
<dbReference type="InterPro" id="IPR020606">
    <property type="entry name" value="Ribosomal_uS7_CS"/>
</dbReference>
<dbReference type="InterPro" id="IPR023798">
    <property type="entry name" value="Ribosomal_uS7_dom"/>
</dbReference>
<dbReference type="InterPro" id="IPR036823">
    <property type="entry name" value="Ribosomal_uS7_dom_sf"/>
</dbReference>
<dbReference type="NCBIfam" id="TIGR01029">
    <property type="entry name" value="rpsG_bact"/>
    <property type="match status" value="1"/>
</dbReference>
<dbReference type="PANTHER" id="PTHR11205">
    <property type="entry name" value="RIBOSOMAL PROTEIN S7"/>
    <property type="match status" value="1"/>
</dbReference>
<dbReference type="Pfam" id="PF00177">
    <property type="entry name" value="Ribosomal_S7"/>
    <property type="match status" value="1"/>
</dbReference>
<dbReference type="PIRSF" id="PIRSF002122">
    <property type="entry name" value="RPS7p_RPS7a_RPS5e_RPS7o"/>
    <property type="match status" value="1"/>
</dbReference>
<dbReference type="SUPFAM" id="SSF47973">
    <property type="entry name" value="Ribosomal protein S7"/>
    <property type="match status" value="1"/>
</dbReference>
<dbReference type="PROSITE" id="PS00052">
    <property type="entry name" value="RIBOSOMAL_S7"/>
    <property type="match status" value="1"/>
</dbReference>
<keyword id="KW-0687">Ribonucleoprotein</keyword>
<keyword id="KW-0689">Ribosomal protein</keyword>
<keyword id="KW-0694">RNA-binding</keyword>
<keyword id="KW-0699">rRNA-binding</keyword>
<keyword id="KW-0820">tRNA-binding</keyword>
<proteinExistence type="inferred from homology"/>
<organism>
    <name type="scientific">Ectopseudomonas mendocina (strain ymp)</name>
    <name type="common">Pseudomonas mendocina</name>
    <dbReference type="NCBI Taxonomy" id="399739"/>
    <lineage>
        <taxon>Bacteria</taxon>
        <taxon>Pseudomonadati</taxon>
        <taxon>Pseudomonadota</taxon>
        <taxon>Gammaproteobacteria</taxon>
        <taxon>Pseudomonadales</taxon>
        <taxon>Pseudomonadaceae</taxon>
        <taxon>Ectopseudomonas</taxon>
    </lineage>
</organism>